<reference key="1">
    <citation type="journal article" date="2006" name="Genome Biol.">
        <title>The genome of Rhizobium leguminosarum has recognizable core and accessory components.</title>
        <authorList>
            <person name="Young J.P.W."/>
            <person name="Crossman L.C."/>
            <person name="Johnston A.W.B."/>
            <person name="Thomson N.R."/>
            <person name="Ghazoui Z.F."/>
            <person name="Hull K.H."/>
            <person name="Wexler M."/>
            <person name="Curson A.R.J."/>
            <person name="Todd J.D."/>
            <person name="Poole P.S."/>
            <person name="Mauchline T.H."/>
            <person name="East A.K."/>
            <person name="Quail M.A."/>
            <person name="Churcher C."/>
            <person name="Arrowsmith C."/>
            <person name="Cherevach I."/>
            <person name="Chillingworth T."/>
            <person name="Clarke K."/>
            <person name="Cronin A."/>
            <person name="Davis P."/>
            <person name="Fraser A."/>
            <person name="Hance Z."/>
            <person name="Hauser H."/>
            <person name="Jagels K."/>
            <person name="Moule S."/>
            <person name="Mungall K."/>
            <person name="Norbertczak H."/>
            <person name="Rabbinowitsch E."/>
            <person name="Sanders M."/>
            <person name="Simmonds M."/>
            <person name="Whitehead S."/>
            <person name="Parkhill J."/>
        </authorList>
    </citation>
    <scope>NUCLEOTIDE SEQUENCE [LARGE SCALE GENOMIC DNA]</scope>
    <source>
        <strain>DSM 114642 / LMG 32736 / 3841</strain>
    </source>
</reference>
<comment type="function">
    <text evidence="1">Necessary for normal cell division and for the maintenance of normal septation.</text>
</comment>
<comment type="cofactor">
    <cofactor evidence="1">
        <name>Mg(2+)</name>
        <dbReference type="ChEBI" id="CHEBI:18420"/>
    </cofactor>
</comment>
<comment type="similarity">
    <text evidence="1">Belongs to the TRAFAC class TrmE-Era-EngA-EngB-Septin-like GTPase superfamily. EngB GTPase family.</text>
</comment>
<evidence type="ECO:0000255" key="1">
    <source>
        <dbReference type="HAMAP-Rule" id="MF_00321"/>
    </source>
</evidence>
<feature type="chain" id="PRO_0000266927" description="Probable GTP-binding protein EngB">
    <location>
        <begin position="1"/>
        <end position="217"/>
    </location>
</feature>
<feature type="domain" description="EngB-type G" evidence="1">
    <location>
        <begin position="29"/>
        <end position="213"/>
    </location>
</feature>
<feature type="binding site" evidence="1">
    <location>
        <begin position="37"/>
        <end position="44"/>
    </location>
    <ligand>
        <name>GTP</name>
        <dbReference type="ChEBI" id="CHEBI:37565"/>
    </ligand>
</feature>
<feature type="binding site" evidence="1">
    <location>
        <position position="44"/>
    </location>
    <ligand>
        <name>Mg(2+)</name>
        <dbReference type="ChEBI" id="CHEBI:18420"/>
    </ligand>
</feature>
<feature type="binding site" evidence="1">
    <location>
        <begin position="64"/>
        <end position="68"/>
    </location>
    <ligand>
        <name>GTP</name>
        <dbReference type="ChEBI" id="CHEBI:37565"/>
    </ligand>
</feature>
<feature type="binding site" evidence="1">
    <location>
        <position position="66"/>
    </location>
    <ligand>
        <name>Mg(2+)</name>
        <dbReference type="ChEBI" id="CHEBI:18420"/>
    </ligand>
</feature>
<feature type="binding site" evidence="1">
    <location>
        <begin position="91"/>
        <end position="94"/>
    </location>
    <ligand>
        <name>GTP</name>
        <dbReference type="ChEBI" id="CHEBI:37565"/>
    </ligand>
</feature>
<feature type="binding site" evidence="1">
    <location>
        <begin position="158"/>
        <end position="161"/>
    </location>
    <ligand>
        <name>GTP</name>
        <dbReference type="ChEBI" id="CHEBI:37565"/>
    </ligand>
</feature>
<feature type="binding site" evidence="1">
    <location>
        <begin position="192"/>
        <end position="194"/>
    </location>
    <ligand>
        <name>GTP</name>
        <dbReference type="ChEBI" id="CHEBI:37565"/>
    </ligand>
</feature>
<gene>
    <name evidence="1" type="primary">engB</name>
    <name type="ordered locus">RL0452</name>
</gene>
<protein>
    <recommendedName>
        <fullName evidence="1">Probable GTP-binding protein EngB</fullName>
    </recommendedName>
</protein>
<organism>
    <name type="scientific">Rhizobium johnstonii (strain DSM 114642 / LMG 32736 / 3841)</name>
    <name type="common">Rhizobium leguminosarum bv. viciae</name>
    <dbReference type="NCBI Taxonomy" id="216596"/>
    <lineage>
        <taxon>Bacteria</taxon>
        <taxon>Pseudomonadati</taxon>
        <taxon>Pseudomonadota</taxon>
        <taxon>Alphaproteobacteria</taxon>
        <taxon>Hyphomicrobiales</taxon>
        <taxon>Rhizobiaceae</taxon>
        <taxon>Rhizobium/Agrobacterium group</taxon>
        <taxon>Rhizobium</taxon>
        <taxon>Rhizobium johnstonii</taxon>
    </lineage>
</organism>
<sequence length="217" mass="23691">MPETEKPLFGHPWIFIRGVPSLNFLPPEGPLEVAFAGRSNVGKSSLINALVGQKGLARTSNTPGRTQELNYFVPDGYSGEGGDLPPTAIVDMPGYGYAQAPKEQVDKWTKLVFDYLRGRATLKRVYVLIDSRHGIKKNDDDVLDLLDKAAVSYQIVLTKTDKIKAAGVPKLLAETAEKIRKRPAAYPGVLSTSSEKGDGLDELRQAIAETVGIARWK</sequence>
<accession>Q1MM59</accession>
<name>ENGB_RHIJ3</name>
<keyword id="KW-0131">Cell cycle</keyword>
<keyword id="KW-0132">Cell division</keyword>
<keyword id="KW-0342">GTP-binding</keyword>
<keyword id="KW-0460">Magnesium</keyword>
<keyword id="KW-0479">Metal-binding</keyword>
<keyword id="KW-0547">Nucleotide-binding</keyword>
<keyword id="KW-0717">Septation</keyword>
<dbReference type="EMBL" id="AM236080">
    <property type="protein sequence ID" value="CAK05943.1"/>
    <property type="molecule type" value="Genomic_DNA"/>
</dbReference>
<dbReference type="SMR" id="Q1MM59"/>
<dbReference type="EnsemblBacteria" id="CAK05943">
    <property type="protein sequence ID" value="CAK05943"/>
    <property type="gene ID" value="RL0452"/>
</dbReference>
<dbReference type="KEGG" id="rle:RL0452"/>
<dbReference type="eggNOG" id="COG0218">
    <property type="taxonomic scope" value="Bacteria"/>
</dbReference>
<dbReference type="HOGENOM" id="CLU_033732_2_0_5"/>
<dbReference type="Proteomes" id="UP000006575">
    <property type="component" value="Chromosome"/>
</dbReference>
<dbReference type="GO" id="GO:0005829">
    <property type="term" value="C:cytosol"/>
    <property type="evidence" value="ECO:0007669"/>
    <property type="project" value="TreeGrafter"/>
</dbReference>
<dbReference type="GO" id="GO:0005525">
    <property type="term" value="F:GTP binding"/>
    <property type="evidence" value="ECO:0007669"/>
    <property type="project" value="UniProtKB-UniRule"/>
</dbReference>
<dbReference type="GO" id="GO:0046872">
    <property type="term" value="F:metal ion binding"/>
    <property type="evidence" value="ECO:0007669"/>
    <property type="project" value="UniProtKB-KW"/>
</dbReference>
<dbReference type="GO" id="GO:0000917">
    <property type="term" value="P:division septum assembly"/>
    <property type="evidence" value="ECO:0007669"/>
    <property type="project" value="UniProtKB-KW"/>
</dbReference>
<dbReference type="CDD" id="cd01876">
    <property type="entry name" value="YihA_EngB"/>
    <property type="match status" value="1"/>
</dbReference>
<dbReference type="Gene3D" id="3.40.50.300">
    <property type="entry name" value="P-loop containing nucleotide triphosphate hydrolases"/>
    <property type="match status" value="1"/>
</dbReference>
<dbReference type="HAMAP" id="MF_00321">
    <property type="entry name" value="GTPase_EngB"/>
    <property type="match status" value="1"/>
</dbReference>
<dbReference type="InterPro" id="IPR030393">
    <property type="entry name" value="G_ENGB_dom"/>
</dbReference>
<dbReference type="InterPro" id="IPR006073">
    <property type="entry name" value="GTP-bd"/>
</dbReference>
<dbReference type="InterPro" id="IPR019987">
    <property type="entry name" value="GTP-bd_ribosome_bio_YsxC"/>
</dbReference>
<dbReference type="InterPro" id="IPR027417">
    <property type="entry name" value="P-loop_NTPase"/>
</dbReference>
<dbReference type="NCBIfam" id="TIGR03598">
    <property type="entry name" value="GTPase_YsxC"/>
    <property type="match status" value="1"/>
</dbReference>
<dbReference type="PANTHER" id="PTHR11649:SF13">
    <property type="entry name" value="ENGB-TYPE G DOMAIN-CONTAINING PROTEIN"/>
    <property type="match status" value="1"/>
</dbReference>
<dbReference type="PANTHER" id="PTHR11649">
    <property type="entry name" value="MSS1/TRME-RELATED GTP-BINDING PROTEIN"/>
    <property type="match status" value="1"/>
</dbReference>
<dbReference type="Pfam" id="PF01926">
    <property type="entry name" value="MMR_HSR1"/>
    <property type="match status" value="1"/>
</dbReference>
<dbReference type="SUPFAM" id="SSF52540">
    <property type="entry name" value="P-loop containing nucleoside triphosphate hydrolases"/>
    <property type="match status" value="1"/>
</dbReference>
<dbReference type="PROSITE" id="PS51706">
    <property type="entry name" value="G_ENGB"/>
    <property type="match status" value="1"/>
</dbReference>
<proteinExistence type="inferred from homology"/>